<feature type="chain" id="PRO_0000064233" description="Glycylpeptide N-tetradecanoyltransferase">
    <location>
        <begin position="1"/>
        <end position="529"/>
    </location>
</feature>
<feature type="region of interest" description="Disordered" evidence="3">
    <location>
        <begin position="1"/>
        <end position="65"/>
    </location>
</feature>
<feature type="compositionally biased region" description="Polar residues" evidence="3">
    <location>
        <begin position="1"/>
        <end position="10"/>
    </location>
</feature>
<feature type="compositionally biased region" description="Basic and acidic residues" evidence="3">
    <location>
        <begin position="11"/>
        <end position="23"/>
    </location>
</feature>
<feature type="compositionally biased region" description="Polar residues" evidence="3">
    <location>
        <begin position="26"/>
        <end position="40"/>
    </location>
</feature>
<feature type="active site" description="Proton acceptor; via carboxylate" evidence="1">
    <location>
        <position position="529"/>
    </location>
</feature>
<feature type="binding site" evidence="2">
    <location>
        <begin position="118"/>
        <end position="121"/>
    </location>
    <ligand>
        <name>tetradecanoyl-CoA</name>
        <dbReference type="ChEBI" id="CHEBI:57385"/>
    </ligand>
</feature>
<feature type="binding site" evidence="2">
    <location>
        <begin position="252"/>
        <end position="254"/>
    </location>
    <ligand>
        <name>tetradecanoyl-CoA</name>
        <dbReference type="ChEBI" id="CHEBI:57385"/>
    </ligand>
</feature>
<feature type="binding site" evidence="2">
    <location>
        <begin position="260"/>
        <end position="264"/>
    </location>
    <ligand>
        <name>tetradecanoyl-CoA</name>
        <dbReference type="ChEBI" id="CHEBI:57385"/>
    </ligand>
</feature>
<evidence type="ECO:0000250" key="1"/>
<evidence type="ECO:0000250" key="2">
    <source>
        <dbReference type="UniProtKB" id="P14743"/>
    </source>
</evidence>
<evidence type="ECO:0000256" key="3">
    <source>
        <dbReference type="SAM" id="MobiDB-lite"/>
    </source>
</evidence>
<evidence type="ECO:0000305" key="4"/>
<protein>
    <recommendedName>
        <fullName>Glycylpeptide N-tetradecanoyltransferase</fullName>
        <ecNumber>2.3.1.97</ecNumber>
    </recommendedName>
    <alternativeName>
        <fullName>Myristoyl-CoA:protein N-myristoyltransferase</fullName>
        <shortName>NMT</shortName>
    </alternativeName>
    <alternativeName>
        <fullName>Peptide N-myristoyltransferase</fullName>
    </alternativeName>
</protein>
<comment type="function">
    <text>Adds a myristoyl group to the N-terminal glycine residue of certain cellular proteins.</text>
</comment>
<comment type="catalytic activity">
    <reaction>
        <text>N-terminal glycyl-[protein] + tetradecanoyl-CoA = N-tetradecanoylglycyl-[protein] + CoA + H(+)</text>
        <dbReference type="Rhea" id="RHEA:15521"/>
        <dbReference type="Rhea" id="RHEA-COMP:12666"/>
        <dbReference type="Rhea" id="RHEA-COMP:12667"/>
        <dbReference type="ChEBI" id="CHEBI:15378"/>
        <dbReference type="ChEBI" id="CHEBI:57287"/>
        <dbReference type="ChEBI" id="CHEBI:57385"/>
        <dbReference type="ChEBI" id="CHEBI:64723"/>
        <dbReference type="ChEBI" id="CHEBI:133050"/>
        <dbReference type="EC" id="2.3.1.97"/>
    </reaction>
</comment>
<comment type="subunit">
    <text evidence="1">Monomer.</text>
</comment>
<comment type="subcellular location">
    <subcellularLocation>
        <location>Cytoplasm</location>
    </subcellularLocation>
</comment>
<comment type="similarity">
    <text evidence="4">Belongs to the NMT family.</text>
</comment>
<reference key="1">
    <citation type="journal article" date="1994" name="J. Biol. Chem.">
        <title>Comparison of myristoyl-CoA:protein N-myristoyltransferases from three pathogenic fungi: Cryptococcus neoformans, Histoplasma capsulatum, and Candida albicans.</title>
        <authorList>
            <person name="Lodge J.K."/>
            <person name="Johnson R.L."/>
            <person name="Weinberg R.A."/>
            <person name="Gordon J.I."/>
        </authorList>
    </citation>
    <scope>NUCLEOTIDE SEQUENCE [GENOMIC DNA]</scope>
    <source>
        <strain>ATCC 26032 / G217B</strain>
    </source>
</reference>
<name>NMT_AJECA</name>
<dbReference type="EC" id="2.3.1.97"/>
<dbReference type="EMBL" id="L25118">
    <property type="protein sequence ID" value="AAA17549.1"/>
    <property type="molecule type" value="Unassigned_DNA"/>
</dbReference>
<dbReference type="PIR" id="B49993">
    <property type="entry name" value="B49993"/>
</dbReference>
<dbReference type="SMR" id="P34763"/>
<dbReference type="GO" id="GO:0005737">
    <property type="term" value="C:cytoplasm"/>
    <property type="evidence" value="ECO:0007669"/>
    <property type="project" value="UniProtKB-SubCell"/>
</dbReference>
<dbReference type="GO" id="GO:0004379">
    <property type="term" value="F:glycylpeptide N-tetradecanoyltransferase activity"/>
    <property type="evidence" value="ECO:0007669"/>
    <property type="project" value="UniProtKB-EC"/>
</dbReference>
<dbReference type="FunFam" id="3.40.630.170:FF:000003">
    <property type="entry name" value="Glycylpeptide N-tetradecanoyltransferase"/>
    <property type="match status" value="1"/>
</dbReference>
<dbReference type="FunFam" id="3.40.630.30:FF:000042">
    <property type="entry name" value="Glycylpeptide N-tetradecanoyltransferase"/>
    <property type="match status" value="1"/>
</dbReference>
<dbReference type="FunFam" id="3.40.630.30:FF:000056">
    <property type="entry name" value="Glycylpeptide N-tetradecanoyltransferase"/>
    <property type="match status" value="1"/>
</dbReference>
<dbReference type="Gene3D" id="3.40.630.30">
    <property type="match status" value="2"/>
</dbReference>
<dbReference type="InterPro" id="IPR016181">
    <property type="entry name" value="Acyl_CoA_acyltransferase"/>
</dbReference>
<dbReference type="InterPro" id="IPR000903">
    <property type="entry name" value="NMT"/>
</dbReference>
<dbReference type="InterPro" id="IPR022677">
    <property type="entry name" value="NMT_C"/>
</dbReference>
<dbReference type="InterPro" id="IPR022678">
    <property type="entry name" value="NMT_CS"/>
</dbReference>
<dbReference type="InterPro" id="IPR022676">
    <property type="entry name" value="NMT_N"/>
</dbReference>
<dbReference type="PANTHER" id="PTHR11377:SF5">
    <property type="entry name" value="GLYCYLPEPTIDE N-TETRADECANOYLTRANSFERASE"/>
    <property type="match status" value="1"/>
</dbReference>
<dbReference type="PANTHER" id="PTHR11377">
    <property type="entry name" value="N-MYRISTOYL TRANSFERASE"/>
    <property type="match status" value="1"/>
</dbReference>
<dbReference type="Pfam" id="PF01233">
    <property type="entry name" value="NMT"/>
    <property type="match status" value="1"/>
</dbReference>
<dbReference type="Pfam" id="PF02799">
    <property type="entry name" value="NMT_C"/>
    <property type="match status" value="1"/>
</dbReference>
<dbReference type="PIRSF" id="PIRSF015892">
    <property type="entry name" value="N-myristl_transf"/>
    <property type="match status" value="1"/>
</dbReference>
<dbReference type="SUPFAM" id="SSF55729">
    <property type="entry name" value="Acyl-CoA N-acyltransferases (Nat)"/>
    <property type="match status" value="2"/>
</dbReference>
<dbReference type="PROSITE" id="PS00975">
    <property type="entry name" value="NMT_1"/>
    <property type="match status" value="1"/>
</dbReference>
<dbReference type="PROSITE" id="PS00976">
    <property type="entry name" value="NMT_2"/>
    <property type="match status" value="1"/>
</dbReference>
<keyword id="KW-0012">Acyltransferase</keyword>
<keyword id="KW-0963">Cytoplasm</keyword>
<keyword id="KW-0808">Transferase</keyword>
<proteinExistence type="inferred from homology"/>
<accession>P34763</accession>
<organism>
    <name type="scientific">Ajellomyces capsulatus</name>
    <name type="common">Darling's disease fungus</name>
    <name type="synonym">Histoplasma capsulatum</name>
    <dbReference type="NCBI Taxonomy" id="5037"/>
    <lineage>
        <taxon>Eukaryota</taxon>
        <taxon>Fungi</taxon>
        <taxon>Dikarya</taxon>
        <taxon>Ascomycota</taxon>
        <taxon>Pezizomycotina</taxon>
        <taxon>Eurotiomycetes</taxon>
        <taxon>Eurotiomycetidae</taxon>
        <taxon>Onygenales</taxon>
        <taxon>Ajellomycetaceae</taxon>
        <taxon>Histoplasma</taxon>
    </lineage>
</organism>
<sequence>MSEQEGNQSEHQSEHVGESEGKLPNETPTTSQSTNASTGTAGKGEKKSSDGDPAAANPATKLTPSMAESLLELNPALRSELAGMDKEKATEALRQMNISDLLTGLSVNPKNQKDMASFKFWQTQPVIRFDDRESESPDGPIKIVELDQVSREPIPLVDGFEWVTLDIDDEADVKEFYELLANHYVEDGSAMFRFNYSPAFLNWALKAPGWKREWHVGVRASKSGKLVASICGVPAEIAVRGKSLKVTEINFLCVHKKLRSKRLTPVLIKEITRRCYLNGIYQAIYTVGIMLPTPVSACRYYHRALDWLKLHEVGFSPLPIGSTKSRQVTRNHLPGHTSTPGLRPMQSKDIDAVQDLLNRYLKRFDLSQIFSRKEVDHLLLHKEKPGAEQIVWSYVAEEPGTHRITDFAAFYSLESSVLQNSKHKNVKAAYLYYYATETAFAEKEKGLKERLLMLINDVLILAKKERFDVMNALTLHDNPLFLEQLKFGAGDGQLHYYLFNYRTAPIAGGVNDKNLPDERKRGGVGVILV</sequence>